<name>S18L2_MOUSE</name>
<dbReference type="EMBL" id="AK003863">
    <property type="protein sequence ID" value="BAB23045.1"/>
    <property type="molecule type" value="mRNA"/>
</dbReference>
<dbReference type="EMBL" id="BC027548">
    <property type="protein sequence ID" value="AAH27548.1"/>
    <property type="molecule type" value="mRNA"/>
</dbReference>
<dbReference type="CCDS" id="CCDS40811.1"/>
<dbReference type="RefSeq" id="NP_081070.1">
    <property type="nucleotide sequence ID" value="NM_026794.3"/>
</dbReference>
<dbReference type="SMR" id="Q9D174"/>
<dbReference type="FunCoup" id="Q9D174">
    <property type="interactions" value="72"/>
</dbReference>
<dbReference type="STRING" id="10090.ENSMUSP00000035113"/>
<dbReference type="GlyGen" id="Q9D174">
    <property type="glycosylation" value="1 site, 1 O-linked glycan (1 site)"/>
</dbReference>
<dbReference type="iPTMnet" id="Q9D174"/>
<dbReference type="PhosphoSitePlus" id="Q9D174"/>
<dbReference type="jPOST" id="Q9D174"/>
<dbReference type="PaxDb" id="10090-ENSMUSP00000035113"/>
<dbReference type="ProteomicsDB" id="256814"/>
<dbReference type="Antibodypedia" id="29253">
    <property type="antibodies" value="27 antibodies from 13 providers"/>
</dbReference>
<dbReference type="Ensembl" id="ENSMUST00000035113.11">
    <property type="protein sequence ID" value="ENSMUSP00000035113.9"/>
    <property type="gene ID" value="ENSMUSG00000032526.12"/>
</dbReference>
<dbReference type="GeneID" id="26901"/>
<dbReference type="KEGG" id="mmu:26901"/>
<dbReference type="UCSC" id="uc009sdo.1">
    <property type="organism name" value="mouse"/>
</dbReference>
<dbReference type="AGR" id="MGI:1349474"/>
<dbReference type="CTD" id="51188"/>
<dbReference type="MGI" id="MGI:1349474">
    <property type="gene designation" value="Ss18l2"/>
</dbReference>
<dbReference type="VEuPathDB" id="HostDB:ENSMUSG00000032526"/>
<dbReference type="eggNOG" id="KOG3227">
    <property type="taxonomic scope" value="Eukaryota"/>
</dbReference>
<dbReference type="GeneTree" id="ENSGT00940000160407"/>
<dbReference type="HOGENOM" id="CLU_164146_1_0_1"/>
<dbReference type="InParanoid" id="Q9D174"/>
<dbReference type="OMA" id="AECVQHQ"/>
<dbReference type="OrthoDB" id="9121at9989"/>
<dbReference type="PhylomeDB" id="Q9D174"/>
<dbReference type="BioGRID-ORCS" id="26901">
    <property type="hits" value="27 hits in 77 CRISPR screens"/>
</dbReference>
<dbReference type="ChiTaRS" id="Ss18l2">
    <property type="organism name" value="mouse"/>
</dbReference>
<dbReference type="PRO" id="PR:Q9D174"/>
<dbReference type="Proteomes" id="UP000000589">
    <property type="component" value="Chromosome 9"/>
</dbReference>
<dbReference type="RNAct" id="Q9D174">
    <property type="molecule type" value="protein"/>
</dbReference>
<dbReference type="Bgee" id="ENSMUSG00000032526">
    <property type="expression patterns" value="Expressed in cardiac muscle of left ventricle and 284 other cell types or tissues"/>
</dbReference>
<dbReference type="ExpressionAtlas" id="Q9D174">
    <property type="expression patterns" value="baseline and differential"/>
</dbReference>
<dbReference type="InterPro" id="IPR007726">
    <property type="entry name" value="SS18_N"/>
</dbReference>
<dbReference type="Pfam" id="PF05030">
    <property type="entry name" value="SSXT"/>
    <property type="match status" value="1"/>
</dbReference>
<feature type="chain" id="PRO_0000181827" description="SS18-like protein 2">
    <location>
        <begin position="1"/>
        <end position="77"/>
    </location>
</feature>
<feature type="short sequence motif" description="SH2-binding" evidence="1">
    <location>
        <begin position="50"/>
        <end position="53"/>
    </location>
</feature>
<gene>
    <name type="primary">Ss18l2</name>
    <name type="synonym">Deb1</name>
</gene>
<comment type="similarity">
    <text evidence="2">Belongs to the SS18 family.</text>
</comment>
<sequence length="77" mass="8873">MSVIFAPDWLRGKAKVNQETIQRLLEENDQLIRCIVEYQNKGRANECVQYQHVLHRNLIYLATIADANTSSLTKAVE</sequence>
<proteinExistence type="inferred from homology"/>
<organism>
    <name type="scientific">Mus musculus</name>
    <name type="common">Mouse</name>
    <dbReference type="NCBI Taxonomy" id="10090"/>
    <lineage>
        <taxon>Eukaryota</taxon>
        <taxon>Metazoa</taxon>
        <taxon>Chordata</taxon>
        <taxon>Craniata</taxon>
        <taxon>Vertebrata</taxon>
        <taxon>Euteleostomi</taxon>
        <taxon>Mammalia</taxon>
        <taxon>Eutheria</taxon>
        <taxon>Euarchontoglires</taxon>
        <taxon>Glires</taxon>
        <taxon>Rodentia</taxon>
        <taxon>Myomorpha</taxon>
        <taxon>Muroidea</taxon>
        <taxon>Muridae</taxon>
        <taxon>Murinae</taxon>
        <taxon>Mus</taxon>
        <taxon>Mus</taxon>
    </lineage>
</organism>
<keyword id="KW-1185">Reference proteome</keyword>
<accession>Q9D174</accession>
<evidence type="ECO:0000255" key="1"/>
<evidence type="ECO:0000305" key="2"/>
<protein>
    <recommendedName>
        <fullName>SS18-like protein 2</fullName>
    </recommendedName>
</protein>
<reference key="1">
    <citation type="journal article" date="2005" name="Science">
        <title>The transcriptional landscape of the mammalian genome.</title>
        <authorList>
            <person name="Carninci P."/>
            <person name="Kasukawa T."/>
            <person name="Katayama S."/>
            <person name="Gough J."/>
            <person name="Frith M.C."/>
            <person name="Maeda N."/>
            <person name="Oyama R."/>
            <person name="Ravasi T."/>
            <person name="Lenhard B."/>
            <person name="Wells C."/>
            <person name="Kodzius R."/>
            <person name="Shimokawa K."/>
            <person name="Bajic V.B."/>
            <person name="Brenner S.E."/>
            <person name="Batalov S."/>
            <person name="Forrest A.R."/>
            <person name="Zavolan M."/>
            <person name="Davis M.J."/>
            <person name="Wilming L.G."/>
            <person name="Aidinis V."/>
            <person name="Allen J.E."/>
            <person name="Ambesi-Impiombato A."/>
            <person name="Apweiler R."/>
            <person name="Aturaliya R.N."/>
            <person name="Bailey T.L."/>
            <person name="Bansal M."/>
            <person name="Baxter L."/>
            <person name="Beisel K.W."/>
            <person name="Bersano T."/>
            <person name="Bono H."/>
            <person name="Chalk A.M."/>
            <person name="Chiu K.P."/>
            <person name="Choudhary V."/>
            <person name="Christoffels A."/>
            <person name="Clutterbuck D.R."/>
            <person name="Crowe M.L."/>
            <person name="Dalla E."/>
            <person name="Dalrymple B.P."/>
            <person name="de Bono B."/>
            <person name="Della Gatta G."/>
            <person name="di Bernardo D."/>
            <person name="Down T."/>
            <person name="Engstrom P."/>
            <person name="Fagiolini M."/>
            <person name="Faulkner G."/>
            <person name="Fletcher C.F."/>
            <person name="Fukushima T."/>
            <person name="Furuno M."/>
            <person name="Futaki S."/>
            <person name="Gariboldi M."/>
            <person name="Georgii-Hemming P."/>
            <person name="Gingeras T.R."/>
            <person name="Gojobori T."/>
            <person name="Green R.E."/>
            <person name="Gustincich S."/>
            <person name="Harbers M."/>
            <person name="Hayashi Y."/>
            <person name="Hensch T.K."/>
            <person name="Hirokawa N."/>
            <person name="Hill D."/>
            <person name="Huminiecki L."/>
            <person name="Iacono M."/>
            <person name="Ikeo K."/>
            <person name="Iwama A."/>
            <person name="Ishikawa T."/>
            <person name="Jakt M."/>
            <person name="Kanapin A."/>
            <person name="Katoh M."/>
            <person name="Kawasawa Y."/>
            <person name="Kelso J."/>
            <person name="Kitamura H."/>
            <person name="Kitano H."/>
            <person name="Kollias G."/>
            <person name="Krishnan S.P."/>
            <person name="Kruger A."/>
            <person name="Kummerfeld S.K."/>
            <person name="Kurochkin I.V."/>
            <person name="Lareau L.F."/>
            <person name="Lazarevic D."/>
            <person name="Lipovich L."/>
            <person name="Liu J."/>
            <person name="Liuni S."/>
            <person name="McWilliam S."/>
            <person name="Madan Babu M."/>
            <person name="Madera M."/>
            <person name="Marchionni L."/>
            <person name="Matsuda H."/>
            <person name="Matsuzawa S."/>
            <person name="Miki H."/>
            <person name="Mignone F."/>
            <person name="Miyake S."/>
            <person name="Morris K."/>
            <person name="Mottagui-Tabar S."/>
            <person name="Mulder N."/>
            <person name="Nakano N."/>
            <person name="Nakauchi H."/>
            <person name="Ng P."/>
            <person name="Nilsson R."/>
            <person name="Nishiguchi S."/>
            <person name="Nishikawa S."/>
            <person name="Nori F."/>
            <person name="Ohara O."/>
            <person name="Okazaki Y."/>
            <person name="Orlando V."/>
            <person name="Pang K.C."/>
            <person name="Pavan W.J."/>
            <person name="Pavesi G."/>
            <person name="Pesole G."/>
            <person name="Petrovsky N."/>
            <person name="Piazza S."/>
            <person name="Reed J."/>
            <person name="Reid J.F."/>
            <person name="Ring B.Z."/>
            <person name="Ringwald M."/>
            <person name="Rost B."/>
            <person name="Ruan Y."/>
            <person name="Salzberg S.L."/>
            <person name="Sandelin A."/>
            <person name="Schneider C."/>
            <person name="Schoenbach C."/>
            <person name="Sekiguchi K."/>
            <person name="Semple C.A."/>
            <person name="Seno S."/>
            <person name="Sessa L."/>
            <person name="Sheng Y."/>
            <person name="Shibata Y."/>
            <person name="Shimada H."/>
            <person name="Shimada K."/>
            <person name="Silva D."/>
            <person name="Sinclair B."/>
            <person name="Sperling S."/>
            <person name="Stupka E."/>
            <person name="Sugiura K."/>
            <person name="Sultana R."/>
            <person name="Takenaka Y."/>
            <person name="Taki K."/>
            <person name="Tammoja K."/>
            <person name="Tan S.L."/>
            <person name="Tang S."/>
            <person name="Taylor M.S."/>
            <person name="Tegner J."/>
            <person name="Teichmann S.A."/>
            <person name="Ueda H.R."/>
            <person name="van Nimwegen E."/>
            <person name="Verardo R."/>
            <person name="Wei C.L."/>
            <person name="Yagi K."/>
            <person name="Yamanishi H."/>
            <person name="Zabarovsky E."/>
            <person name="Zhu S."/>
            <person name="Zimmer A."/>
            <person name="Hide W."/>
            <person name="Bult C."/>
            <person name="Grimmond S.M."/>
            <person name="Teasdale R.D."/>
            <person name="Liu E.T."/>
            <person name="Brusic V."/>
            <person name="Quackenbush J."/>
            <person name="Wahlestedt C."/>
            <person name="Mattick J.S."/>
            <person name="Hume D.A."/>
            <person name="Kai C."/>
            <person name="Sasaki D."/>
            <person name="Tomaru Y."/>
            <person name="Fukuda S."/>
            <person name="Kanamori-Katayama M."/>
            <person name="Suzuki M."/>
            <person name="Aoki J."/>
            <person name="Arakawa T."/>
            <person name="Iida J."/>
            <person name="Imamura K."/>
            <person name="Itoh M."/>
            <person name="Kato T."/>
            <person name="Kawaji H."/>
            <person name="Kawagashira N."/>
            <person name="Kawashima T."/>
            <person name="Kojima M."/>
            <person name="Kondo S."/>
            <person name="Konno H."/>
            <person name="Nakano K."/>
            <person name="Ninomiya N."/>
            <person name="Nishio T."/>
            <person name="Okada M."/>
            <person name="Plessy C."/>
            <person name="Shibata K."/>
            <person name="Shiraki T."/>
            <person name="Suzuki S."/>
            <person name="Tagami M."/>
            <person name="Waki K."/>
            <person name="Watahiki A."/>
            <person name="Okamura-Oho Y."/>
            <person name="Suzuki H."/>
            <person name="Kawai J."/>
            <person name="Hayashizaki Y."/>
        </authorList>
    </citation>
    <scope>NUCLEOTIDE SEQUENCE [LARGE SCALE MRNA]</scope>
    <source>
        <strain>C57BL/6J</strain>
    </source>
</reference>
<reference key="2">
    <citation type="journal article" date="2004" name="Genome Res.">
        <title>The status, quality, and expansion of the NIH full-length cDNA project: the Mammalian Gene Collection (MGC).</title>
        <authorList>
            <consortium name="The MGC Project Team"/>
        </authorList>
    </citation>
    <scope>NUCLEOTIDE SEQUENCE [LARGE SCALE MRNA]</scope>
    <source>
        <tissue>Mammary gland</tissue>
    </source>
</reference>